<dbReference type="EMBL" id="AE007870">
    <property type="protein sequence ID" value="AAK90107.2"/>
    <property type="molecule type" value="Genomic_DNA"/>
</dbReference>
<dbReference type="RefSeq" id="NP_357322.2">
    <property type="nucleotide sequence ID" value="NC_003063.2"/>
</dbReference>
<dbReference type="SMR" id="Q7CS30"/>
<dbReference type="STRING" id="176299.Atu3283"/>
<dbReference type="EnsemblBacteria" id="AAK90107">
    <property type="protein sequence ID" value="AAK90107"/>
    <property type="gene ID" value="Atu3283"/>
</dbReference>
<dbReference type="KEGG" id="atu:Atu3283"/>
<dbReference type="PATRIC" id="fig|176299.10.peg.3124"/>
<dbReference type="eggNOG" id="COG1175">
    <property type="taxonomic scope" value="Bacteria"/>
</dbReference>
<dbReference type="HOGENOM" id="CLU_016047_0_3_5"/>
<dbReference type="OrthoDB" id="7375219at2"/>
<dbReference type="PhylomeDB" id="Q7CS30"/>
<dbReference type="BioCyc" id="AGRO:ATU3283-MONOMER"/>
<dbReference type="BioCyc" id="MetaCyc:MONOMER-21950"/>
<dbReference type="Proteomes" id="UP000000813">
    <property type="component" value="Chromosome linear"/>
</dbReference>
<dbReference type="GO" id="GO:0005886">
    <property type="term" value="C:plasma membrane"/>
    <property type="evidence" value="ECO:0007669"/>
    <property type="project" value="UniProtKB-SubCell"/>
</dbReference>
<dbReference type="GO" id="GO:0055085">
    <property type="term" value="P:transmembrane transport"/>
    <property type="evidence" value="ECO:0007669"/>
    <property type="project" value="InterPro"/>
</dbReference>
<dbReference type="CDD" id="cd06261">
    <property type="entry name" value="TM_PBP2"/>
    <property type="match status" value="1"/>
</dbReference>
<dbReference type="Gene3D" id="1.10.3720.10">
    <property type="entry name" value="MetI-like"/>
    <property type="match status" value="1"/>
</dbReference>
<dbReference type="InterPro" id="IPR000515">
    <property type="entry name" value="MetI-like"/>
</dbReference>
<dbReference type="InterPro" id="IPR035906">
    <property type="entry name" value="MetI-like_sf"/>
</dbReference>
<dbReference type="InterPro" id="IPR050809">
    <property type="entry name" value="UgpAE/MalFG_permease"/>
</dbReference>
<dbReference type="PANTHER" id="PTHR43227">
    <property type="entry name" value="BLL4140 PROTEIN"/>
    <property type="match status" value="1"/>
</dbReference>
<dbReference type="PANTHER" id="PTHR43227:SF11">
    <property type="entry name" value="BLL4140 PROTEIN"/>
    <property type="match status" value="1"/>
</dbReference>
<dbReference type="Pfam" id="PF00528">
    <property type="entry name" value="BPD_transp_1"/>
    <property type="match status" value="1"/>
</dbReference>
<dbReference type="SUPFAM" id="SSF161098">
    <property type="entry name" value="MetI-like"/>
    <property type="match status" value="1"/>
</dbReference>
<dbReference type="PROSITE" id="PS50928">
    <property type="entry name" value="ABC_TM1"/>
    <property type="match status" value="1"/>
</dbReference>
<accession>Q7CS30</accession>
<comment type="function">
    <text evidence="4 5">Part of the ABC transporter complex SmoEFGH involved in sulfoquinovosyl glycerol (SQGro) uptake (Probable). Responsible for the translocation of the substrate across the membrane (Probable).</text>
</comment>
<comment type="subunit">
    <text evidence="5">The complex is probably composed of two ATP-binding proteins (SmoE), two transmembrane proteins (SmoG and SmoH) and a solute-binding protein (SmoF).</text>
</comment>
<comment type="subcellular location">
    <subcellularLocation>
        <location evidence="4">Cell inner membrane</location>
        <topology evidence="1">Multi-pass membrane protein</topology>
    </subcellularLocation>
</comment>
<comment type="similarity">
    <text evidence="4">Belongs to the binding-protein-dependent transport system permease family.</text>
</comment>
<evidence type="ECO:0000255" key="1"/>
<evidence type="ECO:0000255" key="2">
    <source>
        <dbReference type="PROSITE-ProRule" id="PRU00441"/>
    </source>
</evidence>
<evidence type="ECO:0000303" key="3">
    <source>
    </source>
</evidence>
<evidence type="ECO:0000305" key="4"/>
<evidence type="ECO:0000305" key="5">
    <source>
    </source>
</evidence>
<evidence type="ECO:0000312" key="6">
    <source>
        <dbReference type="EMBL" id="AAK90107.2"/>
    </source>
</evidence>
<keyword id="KW-0997">Cell inner membrane</keyword>
<keyword id="KW-1003">Cell membrane</keyword>
<keyword id="KW-0472">Membrane</keyword>
<keyword id="KW-1185">Reference proteome</keyword>
<keyword id="KW-0762">Sugar transport</keyword>
<keyword id="KW-0812">Transmembrane</keyword>
<keyword id="KW-1133">Transmembrane helix</keyword>
<keyword id="KW-0813">Transport</keyword>
<sequence length="308" mass="34509">MPERTMVRVDEKQLPRWTRWLDLGDRLLAVLLLAPAAILLSLIIVYPVARLVYTSFFSLSLTSGLPAEFIGFENYTAMFDDPIFWETTWNTVLITLITVPGALFMGLGLALLANLPFSMQWPMRLSLLIPWALPLSFAGLIFAWFFHYEYGVVNDVLNRLGFEGIIWFNSPNWAFAAICLTIIWKTSSFMALMILAGLQTIPRSLYEAADVDGAGKIRRFFEITLPLLKPSIVVALIFRTITALQTFDIPYMMTGGGPGTSTTTLAMYIHQNTVSFLDLGYGSALAVVMFALSMCVTAVYLRIIRTKD</sequence>
<feature type="chain" id="PRO_0000458921" description="Sulfoquinovosyl glycerol transport system permease protein SmoG">
    <location>
        <begin position="1"/>
        <end position="308"/>
    </location>
</feature>
<feature type="transmembrane region" description="Helical" evidence="1">
    <location>
        <begin position="28"/>
        <end position="48"/>
    </location>
</feature>
<feature type="transmembrane region" description="Helical" evidence="1">
    <location>
        <begin position="92"/>
        <end position="112"/>
    </location>
</feature>
<feature type="transmembrane region" description="Helical" evidence="1">
    <location>
        <begin position="126"/>
        <end position="146"/>
    </location>
</feature>
<feature type="transmembrane region" description="Helical" evidence="1">
    <location>
        <begin position="164"/>
        <end position="184"/>
    </location>
</feature>
<feature type="transmembrane region" description="Helical" evidence="1">
    <location>
        <begin position="223"/>
        <end position="243"/>
    </location>
</feature>
<feature type="transmembrane region" description="Helical" evidence="1">
    <location>
        <begin position="279"/>
        <end position="299"/>
    </location>
</feature>
<feature type="domain" description="ABC transmembrane type-1" evidence="2">
    <location>
        <begin position="88"/>
        <end position="300"/>
    </location>
</feature>
<gene>
    <name evidence="3" type="primary">smoG</name>
    <name evidence="6" type="ordered locus">Atu3283</name>
</gene>
<name>SMOG_AGRFC</name>
<protein>
    <recommendedName>
        <fullName evidence="4">Sulfoquinovosyl glycerol transport system permease protein SmoG</fullName>
        <shortName evidence="4">SQGro transport system permease protein SmoG</shortName>
    </recommendedName>
    <alternativeName>
        <fullName evidence="3">SQ monooxygenase cluster protein G</fullName>
    </alternativeName>
</protein>
<proteinExistence type="evidence at protein level"/>
<reference key="1">
    <citation type="journal article" date="2001" name="Science">
        <title>The genome of the natural genetic engineer Agrobacterium tumefaciens C58.</title>
        <authorList>
            <person name="Wood D.W."/>
            <person name="Setubal J.C."/>
            <person name="Kaul R."/>
            <person name="Monks D.E."/>
            <person name="Kitajima J.P."/>
            <person name="Okura V.K."/>
            <person name="Zhou Y."/>
            <person name="Chen L."/>
            <person name="Wood G.E."/>
            <person name="Almeida N.F. Jr."/>
            <person name="Woo L."/>
            <person name="Chen Y."/>
            <person name="Paulsen I.T."/>
            <person name="Eisen J.A."/>
            <person name="Karp P.D."/>
            <person name="Bovee D. Sr."/>
            <person name="Chapman P."/>
            <person name="Clendenning J."/>
            <person name="Deatherage G."/>
            <person name="Gillet W."/>
            <person name="Grant C."/>
            <person name="Kutyavin T."/>
            <person name="Levy R."/>
            <person name="Li M.-J."/>
            <person name="McClelland E."/>
            <person name="Palmieri A."/>
            <person name="Raymond C."/>
            <person name="Rouse G."/>
            <person name="Saenphimmachak C."/>
            <person name="Wu Z."/>
            <person name="Romero P."/>
            <person name="Gordon D."/>
            <person name="Zhang S."/>
            <person name="Yoo H."/>
            <person name="Tao Y."/>
            <person name="Biddle P."/>
            <person name="Jung M."/>
            <person name="Krespan W."/>
            <person name="Perry M."/>
            <person name="Gordon-Kamm B."/>
            <person name="Liao L."/>
            <person name="Kim S."/>
            <person name="Hendrick C."/>
            <person name="Zhao Z.-Y."/>
            <person name="Dolan M."/>
            <person name="Chumley F."/>
            <person name="Tingey S.V."/>
            <person name="Tomb J.-F."/>
            <person name="Gordon M.P."/>
            <person name="Olson M.V."/>
            <person name="Nester E.W."/>
        </authorList>
    </citation>
    <scope>NUCLEOTIDE SEQUENCE [LARGE SCALE GENOMIC DNA]</scope>
    <source>
        <strain>C58 / ATCC 33970</strain>
    </source>
</reference>
<reference key="2">
    <citation type="journal article" date="2001" name="Science">
        <title>Genome sequence of the plant pathogen and biotechnology agent Agrobacterium tumefaciens C58.</title>
        <authorList>
            <person name="Goodner B."/>
            <person name="Hinkle G."/>
            <person name="Gattung S."/>
            <person name="Miller N."/>
            <person name="Blanchard M."/>
            <person name="Qurollo B."/>
            <person name="Goldman B.S."/>
            <person name="Cao Y."/>
            <person name="Askenazi M."/>
            <person name="Halling C."/>
            <person name="Mullin L."/>
            <person name="Houmiel K."/>
            <person name="Gordon J."/>
            <person name="Vaudin M."/>
            <person name="Iartchouk O."/>
            <person name="Epp A."/>
            <person name="Liu F."/>
            <person name="Wollam C."/>
            <person name="Allinger M."/>
            <person name="Doughty D."/>
            <person name="Scott C."/>
            <person name="Lappas C."/>
            <person name="Markelz B."/>
            <person name="Flanagan C."/>
            <person name="Crowell C."/>
            <person name="Gurson J."/>
            <person name="Lomo C."/>
            <person name="Sear C."/>
            <person name="Strub G."/>
            <person name="Cielo C."/>
            <person name="Slater S."/>
        </authorList>
    </citation>
    <scope>NUCLEOTIDE SEQUENCE [LARGE SCALE GENOMIC DNA]</scope>
    <source>
        <strain>C58 / ATCC 33970</strain>
    </source>
</reference>
<reference key="3">
    <citation type="journal article" date="2022" name="Proc. Natl. Acad. Sci. U.S.A.">
        <title>Oxidative desulfurization pathway for complete catabolism of sulfoquinovose by bacteria.</title>
        <authorList>
            <person name="Sharma M."/>
            <person name="Lingford J.P."/>
            <person name="Petricevic M."/>
            <person name="Snow A.J.D."/>
            <person name="Zhang Y."/>
            <person name="Jaervaa M.A."/>
            <person name="Mui J.W."/>
            <person name="Scott N.E."/>
            <person name="Saunders E.C."/>
            <person name="Mao R."/>
            <person name="Epa R."/>
            <person name="da Silva B.M."/>
            <person name="Pires D.E.V."/>
            <person name="Ascher D.B."/>
            <person name="McConville M.J."/>
            <person name="Davies G.J."/>
            <person name="Williams S.J."/>
            <person name="Goddard-Borger E.D."/>
        </authorList>
    </citation>
    <scope>PROBABLE FUNCTION</scope>
    <scope>SUBUNIT</scope>
    <source>
        <strain>C58 / ATCC 33970</strain>
    </source>
</reference>
<organism>
    <name type="scientific">Agrobacterium fabrum (strain C58 / ATCC 33970)</name>
    <name type="common">Agrobacterium tumefaciens (strain C58)</name>
    <dbReference type="NCBI Taxonomy" id="176299"/>
    <lineage>
        <taxon>Bacteria</taxon>
        <taxon>Pseudomonadati</taxon>
        <taxon>Pseudomonadota</taxon>
        <taxon>Alphaproteobacteria</taxon>
        <taxon>Hyphomicrobiales</taxon>
        <taxon>Rhizobiaceae</taxon>
        <taxon>Rhizobium/Agrobacterium group</taxon>
        <taxon>Agrobacterium</taxon>
        <taxon>Agrobacterium tumefaciens complex</taxon>
    </lineage>
</organism>